<proteinExistence type="inferred from homology"/>
<name>GRCA_YERPS</name>
<protein>
    <recommendedName>
        <fullName evidence="1">Autonomous glycyl radical cofactor</fullName>
    </recommendedName>
</protein>
<sequence length="127" mass="14353">MITGIQITKANNEALLNSFWLLDDEKAELRCVCAKSGYAEDQIVPTSELGEIEYREVPLEVQPTVRVEGGQHLNVNVLSRDTLEDAVKNPEKYPQLTIRVSGYAVRFNSLTPEQQRDVITRTFTESL</sequence>
<dbReference type="EMBL" id="BX936398">
    <property type="protein sequence ID" value="CAH22141.1"/>
    <property type="molecule type" value="Genomic_DNA"/>
</dbReference>
<dbReference type="RefSeq" id="WP_002209664.1">
    <property type="nucleotide sequence ID" value="NZ_CP009712.1"/>
</dbReference>
<dbReference type="SMR" id="Q667T8"/>
<dbReference type="GeneID" id="57975986"/>
<dbReference type="KEGG" id="ypo:BZ17_3726"/>
<dbReference type="KEGG" id="yps:YPTB2903"/>
<dbReference type="PATRIC" id="fig|273123.14.peg.3909"/>
<dbReference type="Proteomes" id="UP000001011">
    <property type="component" value="Chromosome"/>
</dbReference>
<dbReference type="GO" id="GO:0005829">
    <property type="term" value="C:cytosol"/>
    <property type="evidence" value="ECO:0007669"/>
    <property type="project" value="TreeGrafter"/>
</dbReference>
<dbReference type="GO" id="GO:0008861">
    <property type="term" value="F:formate C-acetyltransferase activity"/>
    <property type="evidence" value="ECO:0007669"/>
    <property type="project" value="TreeGrafter"/>
</dbReference>
<dbReference type="FunFam" id="3.20.70.20:FF:000002">
    <property type="entry name" value="Autonomous glycyl radical cofactor"/>
    <property type="match status" value="1"/>
</dbReference>
<dbReference type="Gene3D" id="3.20.70.20">
    <property type="match status" value="1"/>
</dbReference>
<dbReference type="HAMAP" id="MF_00806">
    <property type="entry name" value="GrcA"/>
    <property type="match status" value="1"/>
</dbReference>
<dbReference type="InterPro" id="IPR050244">
    <property type="entry name" value="Auton_GlycylRad_Cofactor"/>
</dbReference>
<dbReference type="InterPro" id="IPR019777">
    <property type="entry name" value="Form_AcTrfase_GR_CS"/>
</dbReference>
<dbReference type="InterPro" id="IPR001150">
    <property type="entry name" value="Gly_radical"/>
</dbReference>
<dbReference type="InterPro" id="IPR011140">
    <property type="entry name" value="Glycyl_radical_cofactor_GrcA"/>
</dbReference>
<dbReference type="NCBIfam" id="TIGR04365">
    <property type="entry name" value="spare_glycyl"/>
    <property type="match status" value="1"/>
</dbReference>
<dbReference type="PANTHER" id="PTHR30191">
    <property type="entry name" value="FORMATE ACETYLTRANSFERASE"/>
    <property type="match status" value="1"/>
</dbReference>
<dbReference type="PANTHER" id="PTHR30191:SF0">
    <property type="entry name" value="FORMATE ACETYLTRANSFERASE 1"/>
    <property type="match status" value="1"/>
</dbReference>
<dbReference type="Pfam" id="PF01228">
    <property type="entry name" value="Gly_radical"/>
    <property type="match status" value="1"/>
</dbReference>
<dbReference type="PIRSF" id="PIRSF000378">
    <property type="entry name" value="Gly_radicl_yfiD"/>
    <property type="match status" value="1"/>
</dbReference>
<dbReference type="SUPFAM" id="SSF51998">
    <property type="entry name" value="PFL-like glycyl radical enzymes"/>
    <property type="match status" value="1"/>
</dbReference>
<dbReference type="PROSITE" id="PS00850">
    <property type="entry name" value="GLY_RADICAL_1"/>
    <property type="match status" value="1"/>
</dbReference>
<dbReference type="PROSITE" id="PS51149">
    <property type="entry name" value="GLY_RADICAL_2"/>
    <property type="match status" value="1"/>
</dbReference>
<comment type="function">
    <text evidence="1">Acts as a radical domain for damaged PFL and possibly other radical proteins.</text>
</comment>
<evidence type="ECO:0000255" key="1">
    <source>
        <dbReference type="HAMAP-Rule" id="MF_00806"/>
    </source>
</evidence>
<reference key="1">
    <citation type="journal article" date="2004" name="Proc. Natl. Acad. Sci. U.S.A.">
        <title>Insights into the evolution of Yersinia pestis through whole-genome comparison with Yersinia pseudotuberculosis.</title>
        <authorList>
            <person name="Chain P.S.G."/>
            <person name="Carniel E."/>
            <person name="Larimer F.W."/>
            <person name="Lamerdin J."/>
            <person name="Stoutland P.O."/>
            <person name="Regala W.M."/>
            <person name="Georgescu A.M."/>
            <person name="Vergez L.M."/>
            <person name="Land M.L."/>
            <person name="Motin V.L."/>
            <person name="Brubaker R.R."/>
            <person name="Fowler J."/>
            <person name="Hinnebusch J."/>
            <person name="Marceau M."/>
            <person name="Medigue C."/>
            <person name="Simonet M."/>
            <person name="Chenal-Francisque V."/>
            <person name="Souza B."/>
            <person name="Dacheux D."/>
            <person name="Elliott J.M."/>
            <person name="Derbise A."/>
            <person name="Hauser L.J."/>
            <person name="Garcia E."/>
        </authorList>
    </citation>
    <scope>NUCLEOTIDE SEQUENCE [LARGE SCALE GENOMIC DNA]</scope>
    <source>
        <strain>IP32953</strain>
    </source>
</reference>
<organism>
    <name type="scientific">Yersinia pseudotuberculosis serotype I (strain IP32953)</name>
    <dbReference type="NCBI Taxonomy" id="273123"/>
    <lineage>
        <taxon>Bacteria</taxon>
        <taxon>Pseudomonadati</taxon>
        <taxon>Pseudomonadota</taxon>
        <taxon>Gammaproteobacteria</taxon>
        <taxon>Enterobacterales</taxon>
        <taxon>Yersiniaceae</taxon>
        <taxon>Yersinia</taxon>
    </lineage>
</organism>
<gene>
    <name evidence="1" type="primary">grcA</name>
    <name type="ordered locus">YPTB2903</name>
</gene>
<keyword id="KW-0556">Organic radical</keyword>
<accession>Q667T8</accession>
<feature type="chain" id="PRO_0000166716" description="Autonomous glycyl radical cofactor">
    <location>
        <begin position="1"/>
        <end position="127"/>
    </location>
</feature>
<feature type="domain" description="Glycine radical" evidence="1">
    <location>
        <begin position="5"/>
        <end position="127"/>
    </location>
</feature>
<feature type="modified residue" description="Glycine radical" evidence="1">
    <location>
        <position position="102"/>
    </location>
</feature>